<sequence length="212" mass="22480">MAIGLVGRKCGMTRIFTDAGVSVPVTVIEVDPNRITQIKTLETDGYQAVQVTTGERRESRVTNAQKGHFAKAGVAAGRLVKEFRVTEAELEGREVGGTIGVDLFTVGQIVDVTGQSKGKGFQGGVKRWNFRTQDATHGNSVSHRVLGSTGQNQTPGRVFKGKKMAGHLGDERVTVQGLEIVSVDTERSVLVVKGAIPGATGGDVIVRPTIKA</sequence>
<proteinExistence type="inferred from homology"/>
<name>RL3_ACIB3</name>
<comment type="function">
    <text evidence="1">One of the primary rRNA binding proteins, it binds directly near the 3'-end of the 23S rRNA, where it nucleates assembly of the 50S subunit.</text>
</comment>
<comment type="subunit">
    <text evidence="1">Part of the 50S ribosomal subunit. Forms a cluster with proteins L14 and L19.</text>
</comment>
<comment type="PTM">
    <text evidence="1">Methylated by PrmB.</text>
</comment>
<comment type="similarity">
    <text evidence="1">Belongs to the universal ribosomal protein uL3 family.</text>
</comment>
<reference key="1">
    <citation type="journal article" date="2008" name="J. Bacteriol.">
        <title>Comparative genome sequence analysis of multidrug-resistant Acinetobacter baumannii.</title>
        <authorList>
            <person name="Adams M.D."/>
            <person name="Goglin K."/>
            <person name="Molyneaux N."/>
            <person name="Hujer K.M."/>
            <person name="Lavender H."/>
            <person name="Jamison J.J."/>
            <person name="MacDonald I.J."/>
            <person name="Martin K.M."/>
            <person name="Russo T."/>
            <person name="Campagnari A.A."/>
            <person name="Hujer A.M."/>
            <person name="Bonomo R.A."/>
            <person name="Gill S.R."/>
        </authorList>
    </citation>
    <scope>NUCLEOTIDE SEQUENCE [LARGE SCALE GENOMIC DNA]</scope>
    <source>
        <strain>AB307-0294</strain>
    </source>
</reference>
<feature type="chain" id="PRO_1000141807" description="Large ribosomal subunit protein uL3">
    <location>
        <begin position="1"/>
        <end position="212"/>
    </location>
</feature>
<feature type="region of interest" description="Disordered" evidence="2">
    <location>
        <begin position="136"/>
        <end position="155"/>
    </location>
</feature>
<feature type="modified residue" description="N5-methylglutamine" evidence="1">
    <location>
        <position position="153"/>
    </location>
</feature>
<accession>B7GW02</accession>
<protein>
    <recommendedName>
        <fullName evidence="1">Large ribosomal subunit protein uL3</fullName>
    </recommendedName>
    <alternativeName>
        <fullName evidence="3">50S ribosomal protein L3</fullName>
    </alternativeName>
</protein>
<organism>
    <name type="scientific">Acinetobacter baumannii (strain AB307-0294)</name>
    <dbReference type="NCBI Taxonomy" id="557600"/>
    <lineage>
        <taxon>Bacteria</taxon>
        <taxon>Pseudomonadati</taxon>
        <taxon>Pseudomonadota</taxon>
        <taxon>Gammaproteobacteria</taxon>
        <taxon>Moraxellales</taxon>
        <taxon>Moraxellaceae</taxon>
        <taxon>Acinetobacter</taxon>
        <taxon>Acinetobacter calcoaceticus/baumannii complex</taxon>
    </lineage>
</organism>
<dbReference type="EMBL" id="CP001172">
    <property type="protein sequence ID" value="ACJ56197.1"/>
    <property type="molecule type" value="Genomic_DNA"/>
</dbReference>
<dbReference type="RefSeq" id="WP_001982642.1">
    <property type="nucleotide sequence ID" value="NZ_CP001172.1"/>
</dbReference>
<dbReference type="SMR" id="B7GW02"/>
<dbReference type="GeneID" id="92895317"/>
<dbReference type="HOGENOM" id="CLU_044142_4_1_6"/>
<dbReference type="Proteomes" id="UP000006924">
    <property type="component" value="Chromosome"/>
</dbReference>
<dbReference type="GO" id="GO:0022625">
    <property type="term" value="C:cytosolic large ribosomal subunit"/>
    <property type="evidence" value="ECO:0007669"/>
    <property type="project" value="TreeGrafter"/>
</dbReference>
<dbReference type="GO" id="GO:0019843">
    <property type="term" value="F:rRNA binding"/>
    <property type="evidence" value="ECO:0007669"/>
    <property type="project" value="UniProtKB-UniRule"/>
</dbReference>
<dbReference type="GO" id="GO:0003735">
    <property type="term" value="F:structural constituent of ribosome"/>
    <property type="evidence" value="ECO:0007669"/>
    <property type="project" value="InterPro"/>
</dbReference>
<dbReference type="GO" id="GO:0006412">
    <property type="term" value="P:translation"/>
    <property type="evidence" value="ECO:0007669"/>
    <property type="project" value="UniProtKB-UniRule"/>
</dbReference>
<dbReference type="FunFam" id="2.40.30.10:FF:000004">
    <property type="entry name" value="50S ribosomal protein L3"/>
    <property type="match status" value="1"/>
</dbReference>
<dbReference type="FunFam" id="3.30.160.810:FF:000001">
    <property type="entry name" value="50S ribosomal protein L3"/>
    <property type="match status" value="1"/>
</dbReference>
<dbReference type="Gene3D" id="3.30.160.810">
    <property type="match status" value="1"/>
</dbReference>
<dbReference type="Gene3D" id="2.40.30.10">
    <property type="entry name" value="Translation factors"/>
    <property type="match status" value="1"/>
</dbReference>
<dbReference type="HAMAP" id="MF_01325_B">
    <property type="entry name" value="Ribosomal_uL3_B"/>
    <property type="match status" value="1"/>
</dbReference>
<dbReference type="InterPro" id="IPR000597">
    <property type="entry name" value="Ribosomal_uL3"/>
</dbReference>
<dbReference type="InterPro" id="IPR019927">
    <property type="entry name" value="Ribosomal_uL3_bac/org-type"/>
</dbReference>
<dbReference type="InterPro" id="IPR019926">
    <property type="entry name" value="Ribosomal_uL3_CS"/>
</dbReference>
<dbReference type="InterPro" id="IPR009000">
    <property type="entry name" value="Transl_B-barrel_sf"/>
</dbReference>
<dbReference type="NCBIfam" id="TIGR03625">
    <property type="entry name" value="L3_bact"/>
    <property type="match status" value="1"/>
</dbReference>
<dbReference type="PANTHER" id="PTHR11229">
    <property type="entry name" value="50S RIBOSOMAL PROTEIN L3"/>
    <property type="match status" value="1"/>
</dbReference>
<dbReference type="PANTHER" id="PTHR11229:SF16">
    <property type="entry name" value="LARGE RIBOSOMAL SUBUNIT PROTEIN UL3C"/>
    <property type="match status" value="1"/>
</dbReference>
<dbReference type="Pfam" id="PF00297">
    <property type="entry name" value="Ribosomal_L3"/>
    <property type="match status" value="1"/>
</dbReference>
<dbReference type="SUPFAM" id="SSF50447">
    <property type="entry name" value="Translation proteins"/>
    <property type="match status" value="1"/>
</dbReference>
<dbReference type="PROSITE" id="PS00474">
    <property type="entry name" value="RIBOSOMAL_L3"/>
    <property type="match status" value="1"/>
</dbReference>
<keyword id="KW-0488">Methylation</keyword>
<keyword id="KW-0687">Ribonucleoprotein</keyword>
<keyword id="KW-0689">Ribosomal protein</keyword>
<keyword id="KW-0694">RNA-binding</keyword>
<keyword id="KW-0699">rRNA-binding</keyword>
<gene>
    <name evidence="1" type="primary">rplC</name>
    <name type="ordered locus">ABBFA_000432</name>
</gene>
<evidence type="ECO:0000255" key="1">
    <source>
        <dbReference type="HAMAP-Rule" id="MF_01325"/>
    </source>
</evidence>
<evidence type="ECO:0000256" key="2">
    <source>
        <dbReference type="SAM" id="MobiDB-lite"/>
    </source>
</evidence>
<evidence type="ECO:0000305" key="3"/>